<evidence type="ECO:0000255" key="1">
    <source>
        <dbReference type="HAMAP-Rule" id="MF_00105"/>
    </source>
</evidence>
<dbReference type="EMBL" id="AE007869">
    <property type="protein sequence ID" value="AAK87928.1"/>
    <property type="molecule type" value="Genomic_DNA"/>
</dbReference>
<dbReference type="PIR" id="AE2844">
    <property type="entry name" value="AE2844"/>
</dbReference>
<dbReference type="PIR" id="G97621">
    <property type="entry name" value="G97621"/>
</dbReference>
<dbReference type="RefSeq" id="NP_355143.1">
    <property type="nucleotide sequence ID" value="NC_003062.2"/>
</dbReference>
<dbReference type="RefSeq" id="WP_010972123.1">
    <property type="nucleotide sequence ID" value="NC_003062.2"/>
</dbReference>
<dbReference type="SMR" id="Q8UDE5"/>
<dbReference type="STRING" id="176299.Atu2182"/>
<dbReference type="EnsemblBacteria" id="AAK87928">
    <property type="protein sequence ID" value="AAK87928"/>
    <property type="gene ID" value="Atu2182"/>
</dbReference>
<dbReference type="GeneID" id="1134220"/>
<dbReference type="KEGG" id="atu:Atu2182"/>
<dbReference type="PATRIC" id="fig|176299.10.peg.2195"/>
<dbReference type="eggNOG" id="COG0782">
    <property type="taxonomic scope" value="Bacteria"/>
</dbReference>
<dbReference type="HOGENOM" id="CLU_101379_2_0_5"/>
<dbReference type="OrthoDB" id="9808774at2"/>
<dbReference type="PhylomeDB" id="Q8UDE5"/>
<dbReference type="BioCyc" id="AGRO:ATU2182-MONOMER"/>
<dbReference type="PRO" id="PR:Q8UDE5"/>
<dbReference type="Proteomes" id="UP000000813">
    <property type="component" value="Chromosome circular"/>
</dbReference>
<dbReference type="GO" id="GO:0003677">
    <property type="term" value="F:DNA binding"/>
    <property type="evidence" value="ECO:0007669"/>
    <property type="project" value="UniProtKB-UniRule"/>
</dbReference>
<dbReference type="GO" id="GO:0070063">
    <property type="term" value="F:RNA polymerase binding"/>
    <property type="evidence" value="ECO:0007669"/>
    <property type="project" value="InterPro"/>
</dbReference>
<dbReference type="GO" id="GO:0006354">
    <property type="term" value="P:DNA-templated transcription elongation"/>
    <property type="evidence" value="ECO:0007669"/>
    <property type="project" value="TreeGrafter"/>
</dbReference>
<dbReference type="GO" id="GO:0032784">
    <property type="term" value="P:regulation of DNA-templated transcription elongation"/>
    <property type="evidence" value="ECO:0007669"/>
    <property type="project" value="UniProtKB-UniRule"/>
</dbReference>
<dbReference type="FunFam" id="1.10.287.180:FF:000001">
    <property type="entry name" value="Transcription elongation factor GreA"/>
    <property type="match status" value="1"/>
</dbReference>
<dbReference type="FunFam" id="3.10.50.30:FF:000001">
    <property type="entry name" value="Transcription elongation factor GreA"/>
    <property type="match status" value="1"/>
</dbReference>
<dbReference type="Gene3D" id="3.10.50.30">
    <property type="entry name" value="Transcription elongation factor, GreA/GreB, C-terminal domain"/>
    <property type="match status" value="1"/>
</dbReference>
<dbReference type="Gene3D" id="1.10.287.180">
    <property type="entry name" value="Transcription elongation factor, GreA/GreB, N-terminal domain"/>
    <property type="match status" value="1"/>
</dbReference>
<dbReference type="HAMAP" id="MF_00105">
    <property type="entry name" value="GreA_GreB"/>
    <property type="match status" value="1"/>
</dbReference>
<dbReference type="InterPro" id="IPR036953">
    <property type="entry name" value="GreA/GreB_C_sf"/>
</dbReference>
<dbReference type="InterPro" id="IPR018151">
    <property type="entry name" value="TF_GreA/GreB_CS"/>
</dbReference>
<dbReference type="InterPro" id="IPR006359">
    <property type="entry name" value="Tscrpt_elong_fac_GreA"/>
</dbReference>
<dbReference type="InterPro" id="IPR028624">
    <property type="entry name" value="Tscrpt_elong_fac_GreA/B"/>
</dbReference>
<dbReference type="InterPro" id="IPR001437">
    <property type="entry name" value="Tscrpt_elong_fac_GreA/B_C"/>
</dbReference>
<dbReference type="InterPro" id="IPR023459">
    <property type="entry name" value="Tscrpt_elong_fac_GreA/B_fam"/>
</dbReference>
<dbReference type="InterPro" id="IPR022691">
    <property type="entry name" value="Tscrpt_elong_fac_GreA/B_N"/>
</dbReference>
<dbReference type="InterPro" id="IPR036805">
    <property type="entry name" value="Tscrpt_elong_fac_GreA/B_N_sf"/>
</dbReference>
<dbReference type="NCBIfam" id="TIGR01462">
    <property type="entry name" value="greA"/>
    <property type="match status" value="1"/>
</dbReference>
<dbReference type="NCBIfam" id="NF001261">
    <property type="entry name" value="PRK00226.1-2"/>
    <property type="match status" value="1"/>
</dbReference>
<dbReference type="NCBIfam" id="NF001263">
    <property type="entry name" value="PRK00226.1-4"/>
    <property type="match status" value="1"/>
</dbReference>
<dbReference type="NCBIfam" id="NF001264">
    <property type="entry name" value="PRK00226.1-5"/>
    <property type="match status" value="1"/>
</dbReference>
<dbReference type="PANTHER" id="PTHR30437">
    <property type="entry name" value="TRANSCRIPTION ELONGATION FACTOR GREA"/>
    <property type="match status" value="1"/>
</dbReference>
<dbReference type="PANTHER" id="PTHR30437:SF4">
    <property type="entry name" value="TRANSCRIPTION ELONGATION FACTOR GREA"/>
    <property type="match status" value="1"/>
</dbReference>
<dbReference type="Pfam" id="PF01272">
    <property type="entry name" value="GreA_GreB"/>
    <property type="match status" value="1"/>
</dbReference>
<dbReference type="Pfam" id="PF03449">
    <property type="entry name" value="GreA_GreB_N"/>
    <property type="match status" value="1"/>
</dbReference>
<dbReference type="PIRSF" id="PIRSF006092">
    <property type="entry name" value="GreA_GreB"/>
    <property type="match status" value="1"/>
</dbReference>
<dbReference type="SUPFAM" id="SSF54534">
    <property type="entry name" value="FKBP-like"/>
    <property type="match status" value="1"/>
</dbReference>
<dbReference type="SUPFAM" id="SSF46557">
    <property type="entry name" value="GreA transcript cleavage protein, N-terminal domain"/>
    <property type="match status" value="1"/>
</dbReference>
<dbReference type="PROSITE" id="PS00829">
    <property type="entry name" value="GREAB_1"/>
    <property type="match status" value="1"/>
</dbReference>
<dbReference type="PROSITE" id="PS00830">
    <property type="entry name" value="GREAB_2"/>
    <property type="match status" value="1"/>
</dbReference>
<sequence>MVEKVPMTQGGFVKLQEELRFRQQEERPRIIEAIAEARAHGDLSENAEYHAAKEAQSHNEGRITELEDLTARAEVIDLSKMSGSKIKFGATVKLIDEDSDEEKTYQIVGDQEADVKAGRISISSPIARALIGKEVGDSIEVNAPGGAKGYEILAVQWG</sequence>
<accession>Q8UDE5</accession>
<keyword id="KW-0238">DNA-binding</keyword>
<keyword id="KW-1185">Reference proteome</keyword>
<keyword id="KW-0804">Transcription</keyword>
<keyword id="KW-0805">Transcription regulation</keyword>
<organism>
    <name type="scientific">Agrobacterium fabrum (strain C58 / ATCC 33970)</name>
    <name type="common">Agrobacterium tumefaciens (strain C58)</name>
    <dbReference type="NCBI Taxonomy" id="176299"/>
    <lineage>
        <taxon>Bacteria</taxon>
        <taxon>Pseudomonadati</taxon>
        <taxon>Pseudomonadota</taxon>
        <taxon>Alphaproteobacteria</taxon>
        <taxon>Hyphomicrobiales</taxon>
        <taxon>Rhizobiaceae</taxon>
        <taxon>Rhizobium/Agrobacterium group</taxon>
        <taxon>Agrobacterium</taxon>
        <taxon>Agrobacterium tumefaciens complex</taxon>
    </lineage>
</organism>
<gene>
    <name evidence="1" type="primary">greA</name>
    <name type="ordered locus">Atu2182</name>
    <name type="ORF">AGR_C_3965</name>
</gene>
<protein>
    <recommendedName>
        <fullName evidence="1">Transcription elongation factor GreA</fullName>
    </recommendedName>
    <alternativeName>
        <fullName evidence="1">Transcript cleavage factor GreA</fullName>
    </alternativeName>
</protein>
<proteinExistence type="inferred from homology"/>
<comment type="function">
    <text evidence="1">Necessary for efficient RNA polymerase transcription elongation past template-encoded arresting sites. The arresting sites in DNA have the property of trapping a certain fraction of elongating RNA polymerases that pass through, resulting in locked ternary complexes. Cleavage of the nascent transcript by cleavage factors such as GreA or GreB allows the resumption of elongation from the new 3'terminus. GreA releases sequences of 2 to 3 nucleotides.</text>
</comment>
<comment type="similarity">
    <text evidence="1">Belongs to the GreA/GreB family.</text>
</comment>
<feature type="chain" id="PRO_0000176905" description="Transcription elongation factor GreA">
    <location>
        <begin position="1"/>
        <end position="158"/>
    </location>
</feature>
<reference key="1">
    <citation type="journal article" date="2001" name="Science">
        <title>The genome of the natural genetic engineer Agrobacterium tumefaciens C58.</title>
        <authorList>
            <person name="Wood D.W."/>
            <person name="Setubal J.C."/>
            <person name="Kaul R."/>
            <person name="Monks D.E."/>
            <person name="Kitajima J.P."/>
            <person name="Okura V.K."/>
            <person name="Zhou Y."/>
            <person name="Chen L."/>
            <person name="Wood G.E."/>
            <person name="Almeida N.F. Jr."/>
            <person name="Woo L."/>
            <person name="Chen Y."/>
            <person name="Paulsen I.T."/>
            <person name="Eisen J.A."/>
            <person name="Karp P.D."/>
            <person name="Bovee D. Sr."/>
            <person name="Chapman P."/>
            <person name="Clendenning J."/>
            <person name="Deatherage G."/>
            <person name="Gillet W."/>
            <person name="Grant C."/>
            <person name="Kutyavin T."/>
            <person name="Levy R."/>
            <person name="Li M.-J."/>
            <person name="McClelland E."/>
            <person name="Palmieri A."/>
            <person name="Raymond C."/>
            <person name="Rouse G."/>
            <person name="Saenphimmachak C."/>
            <person name="Wu Z."/>
            <person name="Romero P."/>
            <person name="Gordon D."/>
            <person name="Zhang S."/>
            <person name="Yoo H."/>
            <person name="Tao Y."/>
            <person name="Biddle P."/>
            <person name="Jung M."/>
            <person name="Krespan W."/>
            <person name="Perry M."/>
            <person name="Gordon-Kamm B."/>
            <person name="Liao L."/>
            <person name="Kim S."/>
            <person name="Hendrick C."/>
            <person name="Zhao Z.-Y."/>
            <person name="Dolan M."/>
            <person name="Chumley F."/>
            <person name="Tingey S.V."/>
            <person name="Tomb J.-F."/>
            <person name="Gordon M.P."/>
            <person name="Olson M.V."/>
            <person name="Nester E.W."/>
        </authorList>
    </citation>
    <scope>NUCLEOTIDE SEQUENCE [LARGE SCALE GENOMIC DNA]</scope>
    <source>
        <strain>C58 / ATCC 33970</strain>
    </source>
</reference>
<reference key="2">
    <citation type="journal article" date="2001" name="Science">
        <title>Genome sequence of the plant pathogen and biotechnology agent Agrobacterium tumefaciens C58.</title>
        <authorList>
            <person name="Goodner B."/>
            <person name="Hinkle G."/>
            <person name="Gattung S."/>
            <person name="Miller N."/>
            <person name="Blanchard M."/>
            <person name="Qurollo B."/>
            <person name="Goldman B.S."/>
            <person name="Cao Y."/>
            <person name="Askenazi M."/>
            <person name="Halling C."/>
            <person name="Mullin L."/>
            <person name="Houmiel K."/>
            <person name="Gordon J."/>
            <person name="Vaudin M."/>
            <person name="Iartchouk O."/>
            <person name="Epp A."/>
            <person name="Liu F."/>
            <person name="Wollam C."/>
            <person name="Allinger M."/>
            <person name="Doughty D."/>
            <person name="Scott C."/>
            <person name="Lappas C."/>
            <person name="Markelz B."/>
            <person name="Flanagan C."/>
            <person name="Crowell C."/>
            <person name="Gurson J."/>
            <person name="Lomo C."/>
            <person name="Sear C."/>
            <person name="Strub G."/>
            <person name="Cielo C."/>
            <person name="Slater S."/>
        </authorList>
    </citation>
    <scope>NUCLEOTIDE SEQUENCE [LARGE SCALE GENOMIC DNA]</scope>
    <source>
        <strain>C58 / ATCC 33970</strain>
    </source>
</reference>
<name>GREA_AGRFC</name>